<sequence>MESSRRPLGLTKPSVDQIIKIEAEGISQSRLQLLNPIPGVWFPITLGFRALPNFRREKSFSLHKDRECLLPTESQLQSKRDIGIDTTDGLLKHLMASRSSYCPDGIFTILEQGPMLAQSMATISTELSGSQANRPTLRPLPILLKGTQVAMRLFLLGLRPVRYCLKVFMLKAQEGLHLLVDLVRGHNPVGQIIALEAAPTSASLPLL</sequence>
<protein>
    <recommendedName>
        <fullName>Protein I</fullName>
    </recommendedName>
    <alternativeName>
        <fullName>Accessory protein N2</fullName>
    </alternativeName>
    <alternativeName>
        <fullName>N internal ORF protein</fullName>
        <shortName>IORF</shortName>
    </alternativeName>
    <alternativeName>
        <fullName>Protein in nucleocapsid ORF</fullName>
    </alternativeName>
</protein>
<comment type="function">
    <text evidence="1">Structural protein that is not essential for the viral replication either in tissue culture or in its natural host.</text>
</comment>
<comment type="subcellular location">
    <subcellularLocation>
        <location evidence="1">Virion</location>
    </subcellularLocation>
</comment>
<comment type="miscellaneous">
    <text>The gene encoding this protein is included within the N gene (alternative ORF).</text>
</comment>
<comment type="similarity">
    <text evidence="2">Belongs to the coronavirus I protein family.</text>
</comment>
<accession>P18452</accession>
<evidence type="ECO:0000250" key="1"/>
<evidence type="ECO:0000305" key="2"/>
<name>IORF_CVM1</name>
<feature type="chain" id="PRO_0000106121" description="Protein I">
    <location>
        <begin position="1"/>
        <end position="207"/>
    </location>
</feature>
<keyword id="KW-0946">Virion</keyword>
<proteinExistence type="inferred from homology"/>
<organism>
    <name type="scientific">Murine coronavirus (strain 1)</name>
    <name type="common">MHV-1</name>
    <name type="synonym">Murine hepatitis virus</name>
    <dbReference type="NCBI Taxonomy" id="11139"/>
    <lineage>
        <taxon>Viruses</taxon>
        <taxon>Riboviria</taxon>
        <taxon>Orthornavirae</taxon>
        <taxon>Pisuviricota</taxon>
        <taxon>Pisoniviricetes</taxon>
        <taxon>Nidovirales</taxon>
        <taxon>Cornidovirineae</taxon>
        <taxon>Coronaviridae</taxon>
        <taxon>Orthocoronavirinae</taxon>
        <taxon>Betacoronavirus</taxon>
        <taxon>Embecovirus</taxon>
        <taxon>Murine coronavirus</taxon>
    </lineage>
</organism>
<dbReference type="EMBL" id="M35253">
    <property type="protein sequence ID" value="AAA46440.1"/>
    <property type="molecule type" value="Genomic_RNA"/>
</dbReference>
<dbReference type="PIR" id="H45340">
    <property type="entry name" value="H45340"/>
</dbReference>
<dbReference type="GO" id="GO:0044423">
    <property type="term" value="C:virion component"/>
    <property type="evidence" value="ECO:0007669"/>
    <property type="project" value="UniProtKB-KW"/>
</dbReference>
<dbReference type="CDD" id="cd21662">
    <property type="entry name" value="embe-CoV_Protein-I_like"/>
    <property type="match status" value="1"/>
</dbReference>
<dbReference type="InterPro" id="IPR004876">
    <property type="entry name" value="Corona_nucI"/>
</dbReference>
<dbReference type="InterPro" id="IPR044311">
    <property type="entry name" value="N2-like_embe-CoV"/>
</dbReference>
<dbReference type="Pfam" id="PF03187">
    <property type="entry name" value="Corona_I"/>
    <property type="match status" value="1"/>
</dbReference>
<reference key="1">
    <citation type="journal article" date="1990" name="Virology">
        <title>Sequence comparison of the N genes of five strains of the coronavirus mouse hepatitis virus suggests a three domain structure for the nucleocapsid protein.</title>
        <authorList>
            <person name="Parker M.M."/>
            <person name="Masters P.S."/>
        </authorList>
    </citation>
    <scope>NUCLEOTIDE SEQUENCE [GENOMIC RNA]</scope>
</reference>
<organismHost>
    <name type="scientific">Mus musculus</name>
    <name type="common">Mouse</name>
    <dbReference type="NCBI Taxonomy" id="10090"/>
</organismHost>
<gene>
    <name type="primary">N</name>
    <name type="synonym">I</name>
    <name type="ORF">7b</name>
</gene>